<evidence type="ECO:0000250" key="1">
    <source>
        <dbReference type="UniProtKB" id="Q7K5N4"/>
    </source>
</evidence>
<evidence type="ECO:0000255" key="2">
    <source>
        <dbReference type="PROSITE-ProRule" id="PRU01393"/>
    </source>
</evidence>
<evidence type="ECO:0000255" key="3">
    <source>
        <dbReference type="PROSITE-ProRule" id="PRU01394"/>
    </source>
</evidence>
<evidence type="ECO:0000256" key="4">
    <source>
        <dbReference type="SAM" id="MobiDB-lite"/>
    </source>
</evidence>
<evidence type="ECO:0000305" key="5"/>
<comment type="function">
    <text evidence="1">Catalytic component of the polycomb repressive deubiquitinase (PR-DUB) complex, a complex that specifically mediates deubiquitination of histone H2A monoubiquitinated at 'Lys-119' (H2AK118ub1). Mediates bisymmetric organization of the PR-DUB complex and is involved in association with nucleosomes to mediate deubiquitination. Does not deubiquitinate monoubiquitinated histone H2B. Required to maintain the transcriptionally repressive state of homeotic genes throughout development. The PR-DUB complex has weak or no activity toward 'Lys-48'- and 'Lys-63'-linked polyubiquitin chains. Polycomb group (PcG) protein.</text>
</comment>
<comment type="catalytic activity">
    <reaction evidence="1">
        <text>Thiol-dependent hydrolysis of ester, thioester, amide, peptide and isopeptide bonds formed by the C-terminal Gly of ubiquitin (a 76-residue protein attached to proteins as an intracellular targeting signal).</text>
        <dbReference type="EC" id="3.4.19.12"/>
    </reaction>
</comment>
<comment type="subunit">
    <text evidence="1">Catalytic component of the polycomb repressive deubiquitinase (PR-DUB) complex, at least composed of caly/calypso, Asx and sba (MBD5/6 homolog). The PR-DUB complex associates with nucleosomes to mediate deubiquitination of histone H2AK118ub1 substrates; the association requires the positively charged C-terminal tail of caly, probably due to direct binding of DNA. Interacts (via ULD domain) with Asx (via DEUBAD domain); the interaction produces a stable heterodimer with a composite binding site for ubiquitin. Homodimerizes (via coiled-coil hinge-region between the UCH and ULD domains) to mediate assembly of 2 copies of the caly-Asx heterodimer into a bisymmetric tetramer; dimerization enhances PR-DUB association with nucleosomes.</text>
</comment>
<comment type="subcellular location">
    <subcellularLocation>
        <location evidence="1">Nucleus</location>
    </subcellularLocation>
    <text evidence="1">Localizes to PcG response elements (PREs).</text>
</comment>
<comment type="similarity">
    <text evidence="5">Belongs to the peptidase C12 family. BAP1 subfamily.</text>
</comment>
<protein>
    <recommendedName>
        <fullName evidence="1">Ubiquitin carboxyl-terminal hydrolase calypso</fullName>
        <ecNumber evidence="1">3.4.19.12</ecNumber>
    </recommendedName>
    <alternativeName>
        <fullName evidence="1">BRCA1-associated protein 1 homolog</fullName>
        <shortName evidence="1">BAP1 homolog</shortName>
    </alternativeName>
    <alternativeName>
        <fullName evidence="1">Polycomb group protein calypso</fullName>
    </alternativeName>
</protein>
<organism>
    <name type="scientific">Drosophila grimshawi</name>
    <name type="common">Hawaiian fruit fly</name>
    <name type="synonym">Idiomyia grimshawi</name>
    <dbReference type="NCBI Taxonomy" id="7222"/>
    <lineage>
        <taxon>Eukaryota</taxon>
        <taxon>Metazoa</taxon>
        <taxon>Ecdysozoa</taxon>
        <taxon>Arthropoda</taxon>
        <taxon>Hexapoda</taxon>
        <taxon>Insecta</taxon>
        <taxon>Pterygota</taxon>
        <taxon>Neoptera</taxon>
        <taxon>Endopterygota</taxon>
        <taxon>Diptera</taxon>
        <taxon>Brachycera</taxon>
        <taxon>Muscomorpha</taxon>
        <taxon>Ephydroidea</taxon>
        <taxon>Drosophilidae</taxon>
        <taxon>Drosophila</taxon>
        <taxon>Hawaiian Drosophila</taxon>
    </lineage>
</organism>
<proteinExistence type="inferred from homology"/>
<name>CALYP_DROGR</name>
<feature type="chain" id="PRO_0000395828" description="Ubiquitin carboxyl-terminal hydrolase calypso">
    <location>
        <begin position="1"/>
        <end position="462"/>
    </location>
</feature>
<feature type="domain" description="UCH catalytic" evidence="2">
    <location>
        <begin position="29"/>
        <end position="260"/>
    </location>
</feature>
<feature type="domain" description="ULD" evidence="3">
    <location>
        <begin position="357"/>
        <end position="385"/>
    </location>
</feature>
<feature type="region of interest" description="Positively charged C-terminal tail required for binding nucleosomes" evidence="1">
    <location>
        <begin position="387"/>
        <end position="462"/>
    </location>
</feature>
<feature type="region of interest" description="Disordered" evidence="4">
    <location>
        <begin position="413"/>
        <end position="462"/>
    </location>
</feature>
<feature type="compositionally biased region" description="Low complexity" evidence="4">
    <location>
        <begin position="413"/>
        <end position="447"/>
    </location>
</feature>
<feature type="compositionally biased region" description="Basic residues" evidence="4">
    <location>
        <begin position="448"/>
        <end position="462"/>
    </location>
</feature>
<feature type="active site" description="Nucleophile" evidence="2">
    <location>
        <position position="115"/>
    </location>
</feature>
<feature type="active site" description="Proton donor" evidence="2">
    <location>
        <position position="197"/>
    </location>
</feature>
<feature type="site" description="Transition state stabilizer" evidence="2">
    <location>
        <position position="109"/>
    </location>
</feature>
<feature type="site" description="Important for enzyme activity" evidence="2">
    <location>
        <position position="212"/>
    </location>
</feature>
<dbReference type="EC" id="3.4.19.12" evidence="1"/>
<dbReference type="EMBL" id="CH916375">
    <property type="protein sequence ID" value="EDV98236.1"/>
    <property type="molecule type" value="Genomic_DNA"/>
</dbReference>
<dbReference type="SMR" id="B4JW98"/>
<dbReference type="FunCoup" id="B4JW98">
    <property type="interactions" value="1225"/>
</dbReference>
<dbReference type="STRING" id="7222.B4JW98"/>
<dbReference type="MEROPS" id="C12.A09"/>
<dbReference type="EnsemblMetazoa" id="FBtr0158411">
    <property type="protein sequence ID" value="FBpp0156903"/>
    <property type="gene ID" value="FBgn0130454"/>
</dbReference>
<dbReference type="EnsemblMetazoa" id="XM_001995128.3">
    <property type="protein sequence ID" value="XP_001995164.1"/>
    <property type="gene ID" value="LOC6568805"/>
</dbReference>
<dbReference type="GeneID" id="6568805"/>
<dbReference type="KEGG" id="dgr:6568805"/>
<dbReference type="CTD" id="136037741"/>
<dbReference type="eggNOG" id="KOG2778">
    <property type="taxonomic scope" value="Eukaryota"/>
</dbReference>
<dbReference type="HOGENOM" id="CLU_018316_2_1_1"/>
<dbReference type="InParanoid" id="B4JW98"/>
<dbReference type="OMA" id="MNHGCWE"/>
<dbReference type="OrthoDB" id="1924260at2759"/>
<dbReference type="PhylomeDB" id="B4JW98"/>
<dbReference type="Proteomes" id="UP000001070">
    <property type="component" value="Unassembled WGS sequence"/>
</dbReference>
<dbReference type="GO" id="GO:0000785">
    <property type="term" value="C:chromatin"/>
    <property type="evidence" value="ECO:0000250"/>
    <property type="project" value="UniProtKB"/>
</dbReference>
<dbReference type="GO" id="GO:0005737">
    <property type="term" value="C:cytoplasm"/>
    <property type="evidence" value="ECO:0007669"/>
    <property type="project" value="TreeGrafter"/>
</dbReference>
<dbReference type="GO" id="GO:0035517">
    <property type="term" value="C:PR-DUB complex"/>
    <property type="evidence" value="ECO:0000250"/>
    <property type="project" value="UniProtKB"/>
</dbReference>
<dbReference type="GO" id="GO:0003682">
    <property type="term" value="F:chromatin binding"/>
    <property type="evidence" value="ECO:0000250"/>
    <property type="project" value="UniProtKB"/>
</dbReference>
<dbReference type="GO" id="GO:0004843">
    <property type="term" value="F:cysteine-type deubiquitinase activity"/>
    <property type="evidence" value="ECO:0000250"/>
    <property type="project" value="UniProtKB"/>
</dbReference>
<dbReference type="GO" id="GO:0040029">
    <property type="term" value="P:epigenetic regulation of gene expression"/>
    <property type="evidence" value="ECO:0000250"/>
    <property type="project" value="UniProtKB"/>
</dbReference>
<dbReference type="GO" id="GO:0031507">
    <property type="term" value="P:heterochromatin formation"/>
    <property type="evidence" value="ECO:0000250"/>
    <property type="project" value="UniProtKB"/>
</dbReference>
<dbReference type="GO" id="GO:0016579">
    <property type="term" value="P:protein deubiquitination"/>
    <property type="evidence" value="ECO:0007669"/>
    <property type="project" value="TreeGrafter"/>
</dbReference>
<dbReference type="GO" id="GO:0007385">
    <property type="term" value="P:specification of segmental identity, abdomen"/>
    <property type="evidence" value="ECO:0007669"/>
    <property type="project" value="EnsemblMetazoa"/>
</dbReference>
<dbReference type="GO" id="GO:0006511">
    <property type="term" value="P:ubiquitin-dependent protein catabolic process"/>
    <property type="evidence" value="ECO:0007669"/>
    <property type="project" value="InterPro"/>
</dbReference>
<dbReference type="CDD" id="cd09617">
    <property type="entry name" value="Peptidase_C12_UCH37_BAP1"/>
    <property type="match status" value="1"/>
</dbReference>
<dbReference type="FunFam" id="3.40.532.10:FF:000002">
    <property type="entry name" value="Ubiquitin carboxyl-terminal hydrolase"/>
    <property type="match status" value="1"/>
</dbReference>
<dbReference type="FunFam" id="1.20.58.860:FF:000004">
    <property type="entry name" value="Ubiquitin carboxyl-terminal hydrolase calypso"/>
    <property type="match status" value="1"/>
</dbReference>
<dbReference type="Gene3D" id="1.20.58.860">
    <property type="match status" value="1"/>
</dbReference>
<dbReference type="Gene3D" id="3.40.532.10">
    <property type="entry name" value="Peptidase C12, ubiquitin carboxyl-terminal hydrolase"/>
    <property type="match status" value="1"/>
</dbReference>
<dbReference type="InterPro" id="IPR038765">
    <property type="entry name" value="Papain-like_cys_pep_sf"/>
</dbReference>
<dbReference type="InterPro" id="IPR001578">
    <property type="entry name" value="Peptidase_C12_UCH"/>
</dbReference>
<dbReference type="InterPro" id="IPR036959">
    <property type="entry name" value="Peptidase_C12_UCH_sf"/>
</dbReference>
<dbReference type="InterPro" id="IPR041507">
    <property type="entry name" value="UCH_C"/>
</dbReference>
<dbReference type="PANTHER" id="PTHR10589">
    <property type="entry name" value="UBIQUITIN CARBOXYL-TERMINAL HYDROLASE"/>
    <property type="match status" value="1"/>
</dbReference>
<dbReference type="PANTHER" id="PTHR10589:SF28">
    <property type="entry name" value="UBIQUITIN CARBOXYL-TERMINAL HYDROLASE BAP1"/>
    <property type="match status" value="1"/>
</dbReference>
<dbReference type="Pfam" id="PF01088">
    <property type="entry name" value="Peptidase_C12"/>
    <property type="match status" value="1"/>
</dbReference>
<dbReference type="Pfam" id="PF18031">
    <property type="entry name" value="UCH_C"/>
    <property type="match status" value="1"/>
</dbReference>
<dbReference type="PRINTS" id="PR00707">
    <property type="entry name" value="UBCTHYDRLASE"/>
</dbReference>
<dbReference type="SUPFAM" id="SSF54001">
    <property type="entry name" value="Cysteine proteinases"/>
    <property type="match status" value="1"/>
</dbReference>
<dbReference type="PROSITE" id="PS52048">
    <property type="entry name" value="UCH_DOMAIN"/>
    <property type="match status" value="1"/>
</dbReference>
<dbReference type="PROSITE" id="PS52049">
    <property type="entry name" value="ULD"/>
    <property type="match status" value="1"/>
</dbReference>
<gene>
    <name evidence="1" type="primary">caly</name>
    <name evidence="1" type="synonym">BAP1</name>
    <name type="ORF">GH22997</name>
</gene>
<sequence>MSVAGGSISTAAGNAGKNNALPMAQLADGWLELESDPGLFTLLLEDFGCHDVQVEEVYDLQKPIESPYGFIFLFRWIEERRARRKIVETTAEIFVKDEEAISSIFFAQQVVPNSCATHALLSVLLNCNENNLQLGETLGRLKAHTKGMSPENKGLAIGNTPELACAHNSHAMPQARRRLERTGAGVASCRFTGEAFHFVSFVPINGQLFELDGLKPYPMNHGCWEEHEDWTDKFRRVMAERLGIATGEQDIRFNLMAVVPDRRIAITHKLKMLRTNQAIVSGTLQKLLKADEQGERDEQQRPDTPTTLLEPSAFTARDLQSLLKNLDTEIAINEQHLADENDRRQMFKVDASRRTHNYDKFICTFLSMLAHQGVLGELVSQHLLPSKKIANRLNRQTNAATAAANAANTNVAGTNAAGSKSQQQQQQTQQQPQQTQTAKNGKSPGKTPGRRRKGRNKCRKRK</sequence>
<accession>B4JW98</accession>
<reference key="1">
    <citation type="journal article" date="2007" name="Nature">
        <title>Evolution of genes and genomes on the Drosophila phylogeny.</title>
        <authorList>
            <consortium name="Drosophila 12 genomes consortium"/>
        </authorList>
    </citation>
    <scope>NUCLEOTIDE SEQUENCE [LARGE SCALE GENOMIC DNA]</scope>
    <source>
        <strain>Tucson 15287-2541.00</strain>
    </source>
</reference>
<keyword id="KW-0156">Chromatin regulator</keyword>
<keyword id="KW-0378">Hydrolase</keyword>
<keyword id="KW-0539">Nucleus</keyword>
<keyword id="KW-0645">Protease</keyword>
<keyword id="KW-1185">Reference proteome</keyword>
<keyword id="KW-0788">Thiol protease</keyword>
<keyword id="KW-0833">Ubl conjugation pathway</keyword>